<organism>
    <name type="scientific">Influenza A virus (strain A/Duck/Czechoslovakia/1956 H4N6)</name>
    <dbReference type="NCBI Taxonomy" id="385590"/>
    <lineage>
        <taxon>Viruses</taxon>
        <taxon>Riboviria</taxon>
        <taxon>Orthornavirae</taxon>
        <taxon>Negarnaviricota</taxon>
        <taxon>Polyploviricotina</taxon>
        <taxon>Insthoviricetes</taxon>
        <taxon>Articulavirales</taxon>
        <taxon>Orthomyxoviridae</taxon>
        <taxon>Alphainfluenzavirus</taxon>
        <taxon>Alphainfluenzavirus influenzae</taxon>
        <taxon>Influenza A virus</taxon>
    </lineage>
</organism>
<feature type="chain" id="PRO_0000079034" description="Nucleoprotein">
    <location>
        <begin position="1"/>
        <end position="498"/>
    </location>
</feature>
<feature type="region of interest" description="Disordered" evidence="2">
    <location>
        <begin position="1"/>
        <end position="21"/>
    </location>
</feature>
<feature type="short sequence motif" description="Unconventional nuclear localization signal" evidence="1">
    <location>
        <begin position="1"/>
        <end position="18"/>
    </location>
</feature>
<feature type="short sequence motif" description="Bipartite nuclear localization signal" evidence="1">
    <location>
        <begin position="198"/>
        <end position="216"/>
    </location>
</feature>
<feature type="sequence conflict" description="In Ref. 1; AAA43483." ref="1">
    <original>QLS</original>
    <variation>TTV</variation>
    <location>
        <begin position="357"/>
        <end position="359"/>
    </location>
</feature>
<feature type="sequence conflict" description="In Ref. 1; AAA43483." ref="1">
    <original>V</original>
    <variation>F</variation>
    <location>
        <position position="363"/>
    </location>
</feature>
<protein>
    <recommendedName>
        <fullName evidence="1">Nucleoprotein</fullName>
    </recommendedName>
    <alternativeName>
        <fullName evidence="1">Nucleocapsid protein</fullName>
        <shortName evidence="1">Protein N</shortName>
    </alternativeName>
</protein>
<evidence type="ECO:0000255" key="1">
    <source>
        <dbReference type="HAMAP-Rule" id="MF_04070"/>
    </source>
</evidence>
<evidence type="ECO:0000256" key="2">
    <source>
        <dbReference type="SAM" id="MobiDB-lite"/>
    </source>
</evidence>
<keyword id="KW-0167">Capsid protein</keyword>
<keyword id="KW-1139">Helical capsid protein</keyword>
<keyword id="KW-1048">Host nucleus</keyword>
<keyword id="KW-0945">Host-virus interaction</keyword>
<keyword id="KW-0687">Ribonucleoprotein</keyword>
<keyword id="KW-0694">RNA-binding</keyword>
<keyword id="KW-0543">Viral nucleoprotein</keyword>
<keyword id="KW-1163">Viral penetration into host nucleus</keyword>
<keyword id="KW-0946">Virion</keyword>
<keyword id="KW-1160">Virus entry into host cell</keyword>
<accession>P15662</accession>
<accession>Q0A477</accession>
<reference key="1">
    <citation type="journal article" date="1990" name="J. Virol.">
        <title>Evolution of the nucleoprotein gene of influenza A virus.</title>
        <authorList>
            <person name="Gorman O.T."/>
            <person name="Bean W.J."/>
            <person name="Kawaoka Y."/>
            <person name="Webster R.G."/>
        </authorList>
    </citation>
    <scope>NUCLEOTIDE SEQUENCE [GENOMIC RNA]</scope>
</reference>
<reference key="2">
    <citation type="journal article" date="2006" name="Science">
        <title>Large-scale sequence analysis of avian influenza isolates.</title>
        <authorList>
            <person name="Obenauer J.C."/>
            <person name="Denson J."/>
            <person name="Mehta P.K."/>
            <person name="Su X."/>
            <person name="Mukatira S."/>
            <person name="Finkelstein D.B."/>
            <person name="Xu X."/>
            <person name="Wang J."/>
            <person name="Ma J."/>
            <person name="Fan Y."/>
            <person name="Rakestraw K.M."/>
            <person name="Webster R.G."/>
            <person name="Hoffmann E."/>
            <person name="Krauss S."/>
            <person name="Zheng J."/>
            <person name="Zhang Z."/>
            <person name="Naeve C.W."/>
        </authorList>
    </citation>
    <scope>NUCLEOTIDE SEQUENCE [GENOMIC RNA]</scope>
</reference>
<sequence>MASQGTKRSYEQMETGGERQNATEIRASVGRMVGGIGRFYIQMCTELKLSDYEGRLIQNSITIERMVLSAFDERRNKYLEEHPSAGKDPKKTGGPIYRRRDGKWVRELILYDKEEIRRIWRQANNGEDATAGLTHLMIWHSNLNDATYQRTRALVRTGMDPRMCSLMQGSTLPRRSGAAGAAVKGVGTMVMELIRMIKRGINDRNFWRGENGRRTRIAYERMCNILKGKFQTAAQRAMMDQVRESRNPGNAEIEDLIFLARSALILRGSVAHKSCLPACVYGLAVASGYDFEREGYSLVGIDPFRLLQNSQVFSLIRPNENPAHKSQLVWMACHSAAFEDLRVSSFIRGTRVVPRGQLSTRGVQIASNENMETMDSSTLELRSRYWAIRTKSGGNTNQQRASAGQISVQPTFSVQRNLPFERATIMAAFTGNTEGRTSDMRTEIIRMMESARPEDVSFQGRGVFELSDEKATNPIVPSFDMSNEGSYFFGDNAEEYDN</sequence>
<name>NCAP_I56A1</name>
<proteinExistence type="inferred from homology"/>
<organismHost>
    <name type="scientific">Aves</name>
    <dbReference type="NCBI Taxonomy" id="8782"/>
</organismHost>
<organismHost>
    <name type="scientific">Sus scrofa</name>
    <name type="common">Pig</name>
    <dbReference type="NCBI Taxonomy" id="9823"/>
</organismHost>
<gene>
    <name evidence="1" type="primary">NP</name>
</gene>
<dbReference type="EMBL" id="M30762">
    <property type="protein sequence ID" value="AAA43483.1"/>
    <property type="molecule type" value="Genomic_RNA"/>
</dbReference>
<dbReference type="EMBL" id="CY014650">
    <property type="protein sequence ID" value="ABI84507.1"/>
    <property type="molecule type" value="Other_RNA"/>
</dbReference>
<dbReference type="SMR" id="P15662"/>
<dbReference type="ABCD" id="P15662">
    <property type="antibodies" value="2 sequenced antibodies"/>
</dbReference>
<dbReference type="PRO" id="PR:P15662"/>
<dbReference type="Proteomes" id="UP000008434">
    <property type="component" value="Genome"/>
</dbReference>
<dbReference type="Proteomes" id="UP000108613">
    <property type="component" value="Genome"/>
</dbReference>
<dbReference type="GO" id="GO:0019029">
    <property type="term" value="C:helical viral capsid"/>
    <property type="evidence" value="ECO:0007669"/>
    <property type="project" value="UniProtKB-UniRule"/>
</dbReference>
<dbReference type="GO" id="GO:0043657">
    <property type="term" value="C:host cell"/>
    <property type="evidence" value="ECO:0007669"/>
    <property type="project" value="GOC"/>
</dbReference>
<dbReference type="GO" id="GO:0042025">
    <property type="term" value="C:host cell nucleus"/>
    <property type="evidence" value="ECO:0007669"/>
    <property type="project" value="UniProtKB-SubCell"/>
</dbReference>
<dbReference type="GO" id="GO:1990904">
    <property type="term" value="C:ribonucleoprotein complex"/>
    <property type="evidence" value="ECO:0007669"/>
    <property type="project" value="UniProtKB-KW"/>
</dbReference>
<dbReference type="GO" id="GO:0019013">
    <property type="term" value="C:viral nucleocapsid"/>
    <property type="evidence" value="ECO:0007669"/>
    <property type="project" value="UniProtKB-UniRule"/>
</dbReference>
<dbReference type="GO" id="GO:0003723">
    <property type="term" value="F:RNA binding"/>
    <property type="evidence" value="ECO:0007669"/>
    <property type="project" value="UniProtKB-UniRule"/>
</dbReference>
<dbReference type="GO" id="GO:0005198">
    <property type="term" value="F:structural molecule activity"/>
    <property type="evidence" value="ECO:0007669"/>
    <property type="project" value="UniProtKB-UniRule"/>
</dbReference>
<dbReference type="GO" id="GO:0046718">
    <property type="term" value="P:symbiont entry into host cell"/>
    <property type="evidence" value="ECO:0007669"/>
    <property type="project" value="UniProtKB-KW"/>
</dbReference>
<dbReference type="GO" id="GO:0075732">
    <property type="term" value="P:viral penetration into host nucleus"/>
    <property type="evidence" value="ECO:0007669"/>
    <property type="project" value="UniProtKB-UniRule"/>
</dbReference>
<dbReference type="HAMAP" id="MF_04070">
    <property type="entry name" value="INFV_NCAP"/>
    <property type="match status" value="1"/>
</dbReference>
<dbReference type="InterPro" id="IPR002141">
    <property type="entry name" value="Flu_NP"/>
</dbReference>
<dbReference type="Pfam" id="PF00506">
    <property type="entry name" value="Flu_NP"/>
    <property type="match status" value="1"/>
</dbReference>
<dbReference type="SUPFAM" id="SSF161003">
    <property type="entry name" value="flu NP-like"/>
    <property type="match status" value="1"/>
</dbReference>
<comment type="function">
    <text evidence="1">Encapsidates the negative strand viral RNA, protecting it from nucleases. The encapsidated genomic RNA is termed the ribonucleoprotein (RNP) and serves as template for transcription and replication. The RNP needs to be localized in the host nucleus to start an infectious cycle, but is too large to diffuse through the nuclear pore complex. NP comprises at least 2 nuclear localization signals that are responsible for the active RNP import into the nucleus through cellular importin alpha/beta pathway. Later in the infection, nclear export of RNPs are mediated through viral proteins NEP interacting with M1 which binds nucleoproteins. It is possible that nucleoprotein binds directly host exportin-1/XPO1 and plays an active role in RNPs nuclear export. M1 interaction with RNP seems to hide nucleoprotein's nuclear localization signals. Soon after a virion infects a new cell, M1 dissociates from the RNP under acidification of the virion driven by M2 protein. Dissociation of M1 from RNP unmasks nucleoprotein's nuclear localization signals, targeting the RNP to the nucleus.</text>
</comment>
<comment type="subunit">
    <text evidence="1">Homomultimerizes to form the nucleocapsid. May bind host exportin-1/XPO1. Binds to viral genomic RNA. Protein-RNA contacts are mediated by a combination of electrostatic interactions between positively charged residues and the phosphate backbone and planar interactions between aromatic side chains and bases.</text>
</comment>
<comment type="subcellular location">
    <subcellularLocation>
        <location evidence="1">Virion</location>
    </subcellularLocation>
    <subcellularLocation>
        <location evidence="1">Host nucleus</location>
    </subcellularLocation>
</comment>
<comment type="PTM">
    <text evidence="1">Late in virus-infected cells, may be cleaved from a 56-kDa protein to a 53-kDa protein by a cellular caspase. This cleavage might be a marker for the onset of apoptosis in infected cells or have a specific function in virus host interaction.</text>
</comment>
<comment type="similarity">
    <text evidence="1">Belongs to the influenza viruses nucleoprotein family.</text>
</comment>